<reference key="1">
    <citation type="journal article" date="2008" name="J. Bacteriol.">
        <title>Comparative genome sequence analysis of multidrug-resistant Acinetobacter baumannii.</title>
        <authorList>
            <person name="Adams M.D."/>
            <person name="Goglin K."/>
            <person name="Molyneaux N."/>
            <person name="Hujer K.M."/>
            <person name="Lavender H."/>
            <person name="Jamison J.J."/>
            <person name="MacDonald I.J."/>
            <person name="Martin K.M."/>
            <person name="Russo T."/>
            <person name="Campagnari A.A."/>
            <person name="Hujer A.M."/>
            <person name="Bonomo R.A."/>
            <person name="Gill S.R."/>
        </authorList>
    </citation>
    <scope>NUCLEOTIDE SEQUENCE [LARGE SCALE GENOMIC DNA]</scope>
    <source>
        <strain>AB307-0294</strain>
    </source>
</reference>
<proteinExistence type="inferred from homology"/>
<protein>
    <recommendedName>
        <fullName evidence="1">Large ribosomal subunit protein uL11</fullName>
    </recommendedName>
    <alternativeName>
        <fullName evidence="2">50S ribosomal protein L11</fullName>
    </alternativeName>
</protein>
<keyword id="KW-0488">Methylation</keyword>
<keyword id="KW-0687">Ribonucleoprotein</keyword>
<keyword id="KW-0689">Ribosomal protein</keyword>
<keyword id="KW-0694">RNA-binding</keyword>
<keyword id="KW-0699">rRNA-binding</keyword>
<accession>B7H1K2</accession>
<sequence length="142" mass="15044">MAKKIDGYIKLQVPAGKANPSPPIGPALGQRGVNIMAFCKEFNAATQKVEPGLPIPVVITVYNDKSFTFIMKTPPASILLKKAAGIQKGSSVPNKTKVGKLTRAQLEEIATTKEPDLTGADLDARVRTIAGSARSMGLEVEL</sequence>
<gene>
    <name evidence="1" type="primary">rplK</name>
    <name type="ordered locus">ABBFA_003252</name>
</gene>
<evidence type="ECO:0000255" key="1">
    <source>
        <dbReference type="HAMAP-Rule" id="MF_00736"/>
    </source>
</evidence>
<evidence type="ECO:0000305" key="2"/>
<name>RL11_ACIB3</name>
<dbReference type="EMBL" id="CP001172">
    <property type="protein sequence ID" value="ACJ57767.1"/>
    <property type="molecule type" value="Genomic_DNA"/>
</dbReference>
<dbReference type="RefSeq" id="WP_001074682.1">
    <property type="nucleotide sequence ID" value="NZ_CP001172.1"/>
</dbReference>
<dbReference type="SMR" id="B7H1K2"/>
<dbReference type="GeneID" id="9384044"/>
<dbReference type="HOGENOM" id="CLU_074237_2_1_6"/>
<dbReference type="Proteomes" id="UP000006924">
    <property type="component" value="Chromosome"/>
</dbReference>
<dbReference type="GO" id="GO:0022625">
    <property type="term" value="C:cytosolic large ribosomal subunit"/>
    <property type="evidence" value="ECO:0007669"/>
    <property type="project" value="TreeGrafter"/>
</dbReference>
<dbReference type="GO" id="GO:0070180">
    <property type="term" value="F:large ribosomal subunit rRNA binding"/>
    <property type="evidence" value="ECO:0007669"/>
    <property type="project" value="UniProtKB-UniRule"/>
</dbReference>
<dbReference type="GO" id="GO:0003735">
    <property type="term" value="F:structural constituent of ribosome"/>
    <property type="evidence" value="ECO:0007669"/>
    <property type="project" value="InterPro"/>
</dbReference>
<dbReference type="GO" id="GO:0006412">
    <property type="term" value="P:translation"/>
    <property type="evidence" value="ECO:0007669"/>
    <property type="project" value="UniProtKB-UniRule"/>
</dbReference>
<dbReference type="CDD" id="cd00349">
    <property type="entry name" value="Ribosomal_L11"/>
    <property type="match status" value="1"/>
</dbReference>
<dbReference type="FunFam" id="1.10.10.250:FF:000001">
    <property type="entry name" value="50S ribosomal protein L11"/>
    <property type="match status" value="1"/>
</dbReference>
<dbReference type="FunFam" id="3.30.1550.10:FF:000001">
    <property type="entry name" value="50S ribosomal protein L11"/>
    <property type="match status" value="1"/>
</dbReference>
<dbReference type="Gene3D" id="1.10.10.250">
    <property type="entry name" value="Ribosomal protein L11, C-terminal domain"/>
    <property type="match status" value="1"/>
</dbReference>
<dbReference type="Gene3D" id="3.30.1550.10">
    <property type="entry name" value="Ribosomal protein L11/L12, N-terminal domain"/>
    <property type="match status" value="1"/>
</dbReference>
<dbReference type="HAMAP" id="MF_00736">
    <property type="entry name" value="Ribosomal_uL11"/>
    <property type="match status" value="1"/>
</dbReference>
<dbReference type="InterPro" id="IPR000911">
    <property type="entry name" value="Ribosomal_uL11"/>
</dbReference>
<dbReference type="InterPro" id="IPR006519">
    <property type="entry name" value="Ribosomal_uL11_bac-typ"/>
</dbReference>
<dbReference type="InterPro" id="IPR020783">
    <property type="entry name" value="Ribosomal_uL11_C"/>
</dbReference>
<dbReference type="InterPro" id="IPR036769">
    <property type="entry name" value="Ribosomal_uL11_C_sf"/>
</dbReference>
<dbReference type="InterPro" id="IPR020785">
    <property type="entry name" value="Ribosomal_uL11_CS"/>
</dbReference>
<dbReference type="InterPro" id="IPR020784">
    <property type="entry name" value="Ribosomal_uL11_N"/>
</dbReference>
<dbReference type="InterPro" id="IPR036796">
    <property type="entry name" value="Ribosomal_uL11_N_sf"/>
</dbReference>
<dbReference type="NCBIfam" id="TIGR01632">
    <property type="entry name" value="L11_bact"/>
    <property type="match status" value="1"/>
</dbReference>
<dbReference type="PANTHER" id="PTHR11661">
    <property type="entry name" value="60S RIBOSOMAL PROTEIN L12"/>
    <property type="match status" value="1"/>
</dbReference>
<dbReference type="PANTHER" id="PTHR11661:SF1">
    <property type="entry name" value="LARGE RIBOSOMAL SUBUNIT PROTEIN UL11M"/>
    <property type="match status" value="1"/>
</dbReference>
<dbReference type="Pfam" id="PF00298">
    <property type="entry name" value="Ribosomal_L11"/>
    <property type="match status" value="1"/>
</dbReference>
<dbReference type="Pfam" id="PF03946">
    <property type="entry name" value="Ribosomal_L11_N"/>
    <property type="match status" value="1"/>
</dbReference>
<dbReference type="SMART" id="SM00649">
    <property type="entry name" value="RL11"/>
    <property type="match status" value="1"/>
</dbReference>
<dbReference type="SUPFAM" id="SSF54747">
    <property type="entry name" value="Ribosomal L11/L12e N-terminal domain"/>
    <property type="match status" value="1"/>
</dbReference>
<dbReference type="SUPFAM" id="SSF46906">
    <property type="entry name" value="Ribosomal protein L11, C-terminal domain"/>
    <property type="match status" value="1"/>
</dbReference>
<dbReference type="PROSITE" id="PS00359">
    <property type="entry name" value="RIBOSOMAL_L11"/>
    <property type="match status" value="1"/>
</dbReference>
<organism>
    <name type="scientific">Acinetobacter baumannii (strain AB307-0294)</name>
    <dbReference type="NCBI Taxonomy" id="557600"/>
    <lineage>
        <taxon>Bacteria</taxon>
        <taxon>Pseudomonadati</taxon>
        <taxon>Pseudomonadota</taxon>
        <taxon>Gammaproteobacteria</taxon>
        <taxon>Moraxellales</taxon>
        <taxon>Moraxellaceae</taxon>
        <taxon>Acinetobacter</taxon>
        <taxon>Acinetobacter calcoaceticus/baumannii complex</taxon>
    </lineage>
</organism>
<feature type="chain" id="PRO_1000132846" description="Large ribosomal subunit protein uL11">
    <location>
        <begin position="1"/>
        <end position="142"/>
    </location>
</feature>
<comment type="function">
    <text evidence="1">Forms part of the ribosomal stalk which helps the ribosome interact with GTP-bound translation factors.</text>
</comment>
<comment type="subunit">
    <text evidence="1">Part of the ribosomal stalk of the 50S ribosomal subunit. Interacts with L10 and the large rRNA to form the base of the stalk. L10 forms an elongated spine to which L12 dimers bind in a sequential fashion forming a multimeric L10(L12)X complex.</text>
</comment>
<comment type="PTM">
    <text evidence="1">One or more lysine residues are methylated.</text>
</comment>
<comment type="similarity">
    <text evidence="1">Belongs to the universal ribosomal protein uL11 family.</text>
</comment>